<proteinExistence type="evidence at transcript level"/>
<name>AL7B4_ARATH</name>
<organism evidence="6">
    <name type="scientific">Arabidopsis thaliana</name>
    <name type="common">Mouse-ear cress</name>
    <dbReference type="NCBI Taxonomy" id="3702"/>
    <lineage>
        <taxon>Eukaryota</taxon>
        <taxon>Viridiplantae</taxon>
        <taxon>Streptophyta</taxon>
        <taxon>Embryophyta</taxon>
        <taxon>Tracheophyta</taxon>
        <taxon>Spermatophyta</taxon>
        <taxon>Magnoliopsida</taxon>
        <taxon>eudicotyledons</taxon>
        <taxon>Gunneridae</taxon>
        <taxon>Pentapetalae</taxon>
        <taxon>rosids</taxon>
        <taxon>malvids</taxon>
        <taxon>Brassicales</taxon>
        <taxon>Brassicaceae</taxon>
        <taxon>Camelineae</taxon>
        <taxon>Arabidopsis</taxon>
    </lineage>
</organism>
<feature type="chain" id="PRO_0000056495" description="Aldehyde dehydrogenase family 7 member B4">
    <location>
        <begin position="1"/>
        <end position="508"/>
    </location>
</feature>
<feature type="active site" description="Proton acceptor" evidence="3">
    <location>
        <position position="266"/>
    </location>
</feature>
<feature type="active site" description="Nucleophile" evidence="3">
    <location>
        <position position="300"/>
    </location>
</feature>
<feature type="binding site" evidence="1">
    <location>
        <begin position="244"/>
        <end position="249"/>
    </location>
    <ligand>
        <name>NAD(+)</name>
        <dbReference type="ChEBI" id="CHEBI:57540"/>
    </ligand>
</feature>
<feature type="site" description="Transition state stabilizer" evidence="1">
    <location>
        <position position="165"/>
    </location>
</feature>
<protein>
    <recommendedName>
        <fullName>Aldehyde dehydrogenase family 7 member B4</fullName>
        <ecNumber>1.2.1.3</ecNumber>
    </recommendedName>
    <alternativeName>
        <fullName>Antiquitin-1</fullName>
    </alternativeName>
    <alternativeName>
        <fullName>Turgor-responsive ALDH</fullName>
    </alternativeName>
</protein>
<reference key="1">
    <citation type="journal article" date="2005" name="Plant Mol. Biol.">
        <title>Detailed expression analysis of selected genes of the aldehyde dehydrogenase(ALDH) gene superfamily in Arabidopsis thaliana.</title>
        <authorList>
            <person name="Kirch H.-H."/>
            <person name="Schlingensiepen S."/>
            <person name="Kotchoni S."/>
            <person name="Sunkar R."/>
            <person name="Bartels D."/>
        </authorList>
    </citation>
    <scope>NUCLEOTIDE SEQUENCE [MRNA]</scope>
    <scope>INDUCTION</scope>
</reference>
<reference evidence="5" key="2">
    <citation type="journal article" date="2000" name="Nature">
        <title>Sequence and analysis of chromosome 1 of the plant Arabidopsis thaliana.</title>
        <authorList>
            <person name="Theologis A."/>
            <person name="Ecker J.R."/>
            <person name="Palm C.J."/>
            <person name="Federspiel N.A."/>
            <person name="Kaul S."/>
            <person name="White O."/>
            <person name="Alonso J."/>
            <person name="Altafi H."/>
            <person name="Araujo R."/>
            <person name="Bowman C.L."/>
            <person name="Brooks S.Y."/>
            <person name="Buehler E."/>
            <person name="Chan A."/>
            <person name="Chao Q."/>
            <person name="Chen H."/>
            <person name="Cheuk R.F."/>
            <person name="Chin C.W."/>
            <person name="Chung M.K."/>
            <person name="Conn L."/>
            <person name="Conway A.B."/>
            <person name="Conway A.R."/>
            <person name="Creasy T.H."/>
            <person name="Dewar K."/>
            <person name="Dunn P."/>
            <person name="Etgu P."/>
            <person name="Feldblyum T.V."/>
            <person name="Feng J.-D."/>
            <person name="Fong B."/>
            <person name="Fujii C.Y."/>
            <person name="Gill J.E."/>
            <person name="Goldsmith A.D."/>
            <person name="Haas B."/>
            <person name="Hansen N.F."/>
            <person name="Hughes B."/>
            <person name="Huizar L."/>
            <person name="Hunter J.L."/>
            <person name="Jenkins J."/>
            <person name="Johnson-Hopson C."/>
            <person name="Khan S."/>
            <person name="Khaykin E."/>
            <person name="Kim C.J."/>
            <person name="Koo H.L."/>
            <person name="Kremenetskaia I."/>
            <person name="Kurtz D.B."/>
            <person name="Kwan A."/>
            <person name="Lam B."/>
            <person name="Langin-Hooper S."/>
            <person name="Lee A."/>
            <person name="Lee J.M."/>
            <person name="Lenz C.A."/>
            <person name="Li J.H."/>
            <person name="Li Y.-P."/>
            <person name="Lin X."/>
            <person name="Liu S.X."/>
            <person name="Liu Z.A."/>
            <person name="Luros J.S."/>
            <person name="Maiti R."/>
            <person name="Marziali A."/>
            <person name="Militscher J."/>
            <person name="Miranda M."/>
            <person name="Nguyen M."/>
            <person name="Nierman W.C."/>
            <person name="Osborne B.I."/>
            <person name="Pai G."/>
            <person name="Peterson J."/>
            <person name="Pham P.K."/>
            <person name="Rizzo M."/>
            <person name="Rooney T."/>
            <person name="Rowley D."/>
            <person name="Sakano H."/>
            <person name="Salzberg S.L."/>
            <person name="Schwartz J.R."/>
            <person name="Shinn P."/>
            <person name="Southwick A.M."/>
            <person name="Sun H."/>
            <person name="Tallon L.J."/>
            <person name="Tambunga G."/>
            <person name="Toriumi M.J."/>
            <person name="Town C.D."/>
            <person name="Utterback T."/>
            <person name="Van Aken S."/>
            <person name="Vaysberg M."/>
            <person name="Vysotskaia V.S."/>
            <person name="Walker M."/>
            <person name="Wu D."/>
            <person name="Yu G."/>
            <person name="Fraser C.M."/>
            <person name="Venter J.C."/>
            <person name="Davis R.W."/>
        </authorList>
    </citation>
    <scope>NUCLEOTIDE SEQUENCE [LARGE SCALE GENOMIC DNA]</scope>
    <source>
        <strain>cv. Columbia</strain>
    </source>
</reference>
<reference evidence="5" key="3">
    <citation type="journal article" date="2017" name="Plant J.">
        <title>Araport11: a complete reannotation of the Arabidopsis thaliana reference genome.</title>
        <authorList>
            <person name="Cheng C.Y."/>
            <person name="Krishnakumar V."/>
            <person name="Chan A.P."/>
            <person name="Thibaud-Nissen F."/>
            <person name="Schobel S."/>
            <person name="Town C.D."/>
        </authorList>
    </citation>
    <scope>GENOME REANNOTATION</scope>
    <source>
        <strain>cv. Columbia</strain>
    </source>
</reference>
<reference key="4">
    <citation type="journal article" date="2003" name="Science">
        <title>Empirical analysis of transcriptional activity in the Arabidopsis genome.</title>
        <authorList>
            <person name="Yamada K."/>
            <person name="Lim J."/>
            <person name="Dale J.M."/>
            <person name="Chen H."/>
            <person name="Shinn P."/>
            <person name="Palm C.J."/>
            <person name="Southwick A.M."/>
            <person name="Wu H.C."/>
            <person name="Kim C.J."/>
            <person name="Nguyen M."/>
            <person name="Pham P.K."/>
            <person name="Cheuk R.F."/>
            <person name="Karlin-Newmann G."/>
            <person name="Liu S.X."/>
            <person name="Lam B."/>
            <person name="Sakano H."/>
            <person name="Wu T."/>
            <person name="Yu G."/>
            <person name="Miranda M."/>
            <person name="Quach H.L."/>
            <person name="Tripp M."/>
            <person name="Chang C.H."/>
            <person name="Lee J.M."/>
            <person name="Toriumi M.J."/>
            <person name="Chan M.M."/>
            <person name="Tang C.C."/>
            <person name="Onodera C.S."/>
            <person name="Deng J.M."/>
            <person name="Akiyama K."/>
            <person name="Ansari Y."/>
            <person name="Arakawa T."/>
            <person name="Banh J."/>
            <person name="Banno F."/>
            <person name="Bowser L."/>
            <person name="Brooks S.Y."/>
            <person name="Carninci P."/>
            <person name="Chao Q."/>
            <person name="Choy N."/>
            <person name="Enju A."/>
            <person name="Goldsmith A.D."/>
            <person name="Gurjal M."/>
            <person name="Hansen N.F."/>
            <person name="Hayashizaki Y."/>
            <person name="Johnson-Hopson C."/>
            <person name="Hsuan V.W."/>
            <person name="Iida K."/>
            <person name="Karnes M."/>
            <person name="Khan S."/>
            <person name="Koesema E."/>
            <person name="Ishida J."/>
            <person name="Jiang P.X."/>
            <person name="Jones T."/>
            <person name="Kawai J."/>
            <person name="Kamiya A."/>
            <person name="Meyers C."/>
            <person name="Nakajima M."/>
            <person name="Narusaka M."/>
            <person name="Seki M."/>
            <person name="Sakurai T."/>
            <person name="Satou M."/>
            <person name="Tamse R."/>
            <person name="Vaysberg M."/>
            <person name="Wallender E.K."/>
            <person name="Wong C."/>
            <person name="Yamamura Y."/>
            <person name="Yuan S."/>
            <person name="Shinozaki K."/>
            <person name="Davis R.W."/>
            <person name="Theologis A."/>
            <person name="Ecker J.R."/>
        </authorList>
    </citation>
    <scope>NUCLEOTIDE SEQUENCE [LARGE SCALE MRNA]</scope>
    <source>
        <strain>cv. Columbia</strain>
    </source>
</reference>
<reference evidence="5" key="5">
    <citation type="submission" date="2006-07" db="EMBL/GenBank/DDBJ databases">
        <title>Large-scale analysis of RIKEN Arabidopsis full-length (RAFL) cDNAs.</title>
        <authorList>
            <person name="Totoki Y."/>
            <person name="Seki M."/>
            <person name="Ishida J."/>
            <person name="Nakajima M."/>
            <person name="Enju A."/>
            <person name="Kamiya A."/>
            <person name="Narusaka M."/>
            <person name="Shin-i T."/>
            <person name="Nakagawa M."/>
            <person name="Sakamoto N."/>
            <person name="Oishi K."/>
            <person name="Kohara Y."/>
            <person name="Kobayashi M."/>
            <person name="Toyoda A."/>
            <person name="Sakaki Y."/>
            <person name="Sakurai T."/>
            <person name="Iida K."/>
            <person name="Akiyama K."/>
            <person name="Satou M."/>
            <person name="Toyoda T."/>
            <person name="Konagaya A."/>
            <person name="Carninci P."/>
            <person name="Kawai J."/>
            <person name="Hayashizaki Y."/>
            <person name="Shinozaki K."/>
        </authorList>
    </citation>
    <scope>NUCLEOTIDE SEQUENCE [LARGE SCALE MRNA]</scope>
    <source>
        <strain>cv. Columbia</strain>
    </source>
</reference>
<reference key="6">
    <citation type="journal article" date="2004" name="Trends Plant Sci.">
        <title>The ALDH gene superfamily of Arabidopsis.</title>
        <authorList>
            <person name="Kirch H.-H."/>
            <person name="Bartels D."/>
            <person name="Wei Y."/>
            <person name="Schnable P.S."/>
            <person name="Wood A.J."/>
        </authorList>
    </citation>
    <scope>NOMENCLATURE</scope>
</reference>
<gene>
    <name type="primary">ALDH7B4</name>
    <name type="ordered locus">At1g54100</name>
    <name type="ORF">F15I1.19</name>
</gene>
<evidence type="ECO:0000250" key="1"/>
<evidence type="ECO:0000250" key="2">
    <source>
        <dbReference type="UniProtKB" id="P83402"/>
    </source>
</evidence>
<evidence type="ECO:0000255" key="3">
    <source>
        <dbReference type="PROSITE-ProRule" id="PRU10007"/>
    </source>
</evidence>
<evidence type="ECO:0000269" key="4">
    <source>
    </source>
</evidence>
<evidence type="ECO:0000305" key="5"/>
<evidence type="ECO:0000312" key="6">
    <source>
        <dbReference type="EMBL" id="AAD25783.1"/>
    </source>
</evidence>
<dbReference type="EC" id="1.2.1.3"/>
<dbReference type="EMBL" id="AJ584645">
    <property type="protein sequence ID" value="CAE48164.1"/>
    <property type="molecule type" value="mRNA"/>
</dbReference>
<dbReference type="EMBL" id="AC006577">
    <property type="protein sequence ID" value="AAD25783.1"/>
    <property type="molecule type" value="Genomic_DNA"/>
</dbReference>
<dbReference type="EMBL" id="CP002684">
    <property type="protein sequence ID" value="AEE33048.1"/>
    <property type="molecule type" value="Genomic_DNA"/>
</dbReference>
<dbReference type="EMBL" id="CP002684">
    <property type="protein sequence ID" value="AEE33049.1"/>
    <property type="molecule type" value="Genomic_DNA"/>
</dbReference>
<dbReference type="EMBL" id="AY048242">
    <property type="protein sequence ID" value="AAK82504.1"/>
    <property type="molecule type" value="mRNA"/>
</dbReference>
<dbReference type="EMBL" id="AF378873">
    <property type="protein sequence ID" value="AAK55676.1"/>
    <property type="molecule type" value="mRNA"/>
</dbReference>
<dbReference type="EMBL" id="AY091032">
    <property type="protein sequence ID" value="AAM13853.1"/>
    <property type="molecule type" value="mRNA"/>
</dbReference>
<dbReference type="EMBL" id="AY102145">
    <property type="protein sequence ID" value="AAM26712.1"/>
    <property type="molecule type" value="mRNA"/>
</dbReference>
<dbReference type="EMBL" id="AY117345">
    <property type="protein sequence ID" value="AAM51420.1"/>
    <property type="molecule type" value="mRNA"/>
</dbReference>
<dbReference type="EMBL" id="AK230363">
    <property type="protein sequence ID" value="BAF02162.1"/>
    <property type="molecule type" value="mRNA"/>
</dbReference>
<dbReference type="PIR" id="H96581">
    <property type="entry name" value="H96581"/>
</dbReference>
<dbReference type="RefSeq" id="NP_175812.1">
    <property type="nucleotide sequence ID" value="NM_104287.5"/>
</dbReference>
<dbReference type="RefSeq" id="NP_849807.1">
    <property type="nucleotide sequence ID" value="NM_179476.3"/>
</dbReference>
<dbReference type="SMR" id="Q9SYG7"/>
<dbReference type="BioGRID" id="27074">
    <property type="interactions" value="2"/>
</dbReference>
<dbReference type="FunCoup" id="Q9SYG7">
    <property type="interactions" value="2448"/>
</dbReference>
<dbReference type="STRING" id="3702.Q9SYG7"/>
<dbReference type="PaxDb" id="3702-AT1G54100.1"/>
<dbReference type="ProteomicsDB" id="244867"/>
<dbReference type="EnsemblPlants" id="AT1G54100.1">
    <property type="protein sequence ID" value="AT1G54100.1"/>
    <property type="gene ID" value="AT1G54100"/>
</dbReference>
<dbReference type="EnsemblPlants" id="AT1G54100.2">
    <property type="protein sequence ID" value="AT1G54100.2"/>
    <property type="gene ID" value="AT1G54100"/>
</dbReference>
<dbReference type="GeneID" id="841849"/>
<dbReference type="Gramene" id="AT1G54100.1">
    <property type="protein sequence ID" value="AT1G54100.1"/>
    <property type="gene ID" value="AT1G54100"/>
</dbReference>
<dbReference type="Gramene" id="AT1G54100.2">
    <property type="protein sequence ID" value="AT1G54100.2"/>
    <property type="gene ID" value="AT1G54100"/>
</dbReference>
<dbReference type="KEGG" id="ath:AT1G54100"/>
<dbReference type="Araport" id="AT1G54100"/>
<dbReference type="TAIR" id="AT1G54100">
    <property type="gene designation" value="ALDH7B4"/>
</dbReference>
<dbReference type="eggNOG" id="KOG2453">
    <property type="taxonomic scope" value="Eukaryota"/>
</dbReference>
<dbReference type="HOGENOM" id="CLU_005391_1_2_1"/>
<dbReference type="InParanoid" id="Q9SYG7"/>
<dbReference type="OMA" id="DAWKVYM"/>
<dbReference type="OrthoDB" id="310895at2759"/>
<dbReference type="PhylomeDB" id="Q9SYG7"/>
<dbReference type="BioCyc" id="ARA:AT1G54100-MONOMER"/>
<dbReference type="PRO" id="PR:Q9SYG7"/>
<dbReference type="Proteomes" id="UP000006548">
    <property type="component" value="Chromosome 1"/>
</dbReference>
<dbReference type="ExpressionAtlas" id="Q9SYG7">
    <property type="expression patterns" value="baseline and differential"/>
</dbReference>
<dbReference type="GO" id="GO:0004029">
    <property type="term" value="F:aldehyde dehydrogenase (NAD+) activity"/>
    <property type="evidence" value="ECO:0000250"/>
    <property type="project" value="UniProtKB"/>
</dbReference>
<dbReference type="GO" id="GO:0006081">
    <property type="term" value="P:aldehyde metabolic process"/>
    <property type="evidence" value="ECO:0000250"/>
    <property type="project" value="UniProtKB"/>
</dbReference>
<dbReference type="GO" id="GO:0009737">
    <property type="term" value="P:response to abscisic acid"/>
    <property type="evidence" value="ECO:0000270"/>
    <property type="project" value="TAIR"/>
</dbReference>
<dbReference type="GO" id="GO:0009269">
    <property type="term" value="P:response to desiccation"/>
    <property type="evidence" value="ECO:0000270"/>
    <property type="project" value="TAIR"/>
</dbReference>
<dbReference type="GO" id="GO:0009651">
    <property type="term" value="P:response to salt stress"/>
    <property type="evidence" value="ECO:0000270"/>
    <property type="project" value="TAIR"/>
</dbReference>
<dbReference type="CDD" id="cd07130">
    <property type="entry name" value="ALDH_F7_AASADH"/>
    <property type="match status" value="1"/>
</dbReference>
<dbReference type="FunFam" id="3.40.309.10:FF:000018">
    <property type="entry name" value="Alpha-aminoadipic semialdehyde dehydrogenase"/>
    <property type="match status" value="1"/>
</dbReference>
<dbReference type="Gene3D" id="3.40.605.10">
    <property type="entry name" value="Aldehyde Dehydrogenase, Chain A, domain 1"/>
    <property type="match status" value="1"/>
</dbReference>
<dbReference type="Gene3D" id="3.40.309.10">
    <property type="entry name" value="Aldehyde Dehydrogenase, Chain A, domain 2"/>
    <property type="match status" value="1"/>
</dbReference>
<dbReference type="InterPro" id="IPR016161">
    <property type="entry name" value="Ald_DH/histidinol_DH"/>
</dbReference>
<dbReference type="InterPro" id="IPR016163">
    <property type="entry name" value="Ald_DH_C"/>
</dbReference>
<dbReference type="InterPro" id="IPR029510">
    <property type="entry name" value="Ald_DH_CS_GLU"/>
</dbReference>
<dbReference type="InterPro" id="IPR016162">
    <property type="entry name" value="Ald_DH_N"/>
</dbReference>
<dbReference type="InterPro" id="IPR015590">
    <property type="entry name" value="Aldehyde_DH_dom"/>
</dbReference>
<dbReference type="InterPro" id="IPR044638">
    <property type="entry name" value="ALDH7A1-like"/>
</dbReference>
<dbReference type="PANTHER" id="PTHR43521">
    <property type="entry name" value="ALPHA-AMINOADIPIC SEMIALDEHYDE DEHYDROGENASE"/>
    <property type="match status" value="1"/>
</dbReference>
<dbReference type="PANTHER" id="PTHR43521:SF1">
    <property type="entry name" value="ALPHA-AMINOADIPIC SEMIALDEHYDE DEHYDROGENASE"/>
    <property type="match status" value="1"/>
</dbReference>
<dbReference type="Pfam" id="PF00171">
    <property type="entry name" value="Aldedh"/>
    <property type="match status" value="1"/>
</dbReference>
<dbReference type="SUPFAM" id="SSF53720">
    <property type="entry name" value="ALDH-like"/>
    <property type="match status" value="1"/>
</dbReference>
<dbReference type="PROSITE" id="PS00687">
    <property type="entry name" value="ALDEHYDE_DEHYDR_GLU"/>
    <property type="match status" value="1"/>
</dbReference>
<keyword id="KW-0520">NAD</keyword>
<keyword id="KW-0560">Oxidoreductase</keyword>
<keyword id="KW-1185">Reference proteome</keyword>
<keyword id="KW-0346">Stress response</keyword>
<comment type="catalytic activity">
    <reaction>
        <text>an aldehyde + NAD(+) + H2O = a carboxylate + NADH + 2 H(+)</text>
        <dbReference type="Rhea" id="RHEA:16185"/>
        <dbReference type="ChEBI" id="CHEBI:15377"/>
        <dbReference type="ChEBI" id="CHEBI:15378"/>
        <dbReference type="ChEBI" id="CHEBI:17478"/>
        <dbReference type="ChEBI" id="CHEBI:29067"/>
        <dbReference type="ChEBI" id="CHEBI:57540"/>
        <dbReference type="ChEBI" id="CHEBI:57945"/>
        <dbReference type="EC" id="1.2.1.3"/>
    </reaction>
</comment>
<comment type="subunit">
    <text evidence="2">Homotetramer.</text>
</comment>
<comment type="induction">
    <text evidence="4">By abscisic acid (ABA) and dehydration in roots and plantlets, and by salt stress in plantlets.</text>
</comment>
<comment type="similarity">
    <text evidence="5">Belongs to the aldehyde dehydrogenase family.</text>
</comment>
<sequence length="508" mass="54208">MGSANNEYEFLSEIGLTSHNLGSYVAGKWQANGPLVSTLNPANNQPIAQVVEASLEDYEQGLKACEEAAKIWMQVTAPKRGDIVRQIGDALRSKLDYLGRLLSLEMGKILAEGIGEVQEVIDMCDFAVGLSRQLNGSVIPSERPNHMMLEMWNPLGIVGVITAFNFPCAVLGWNACIALVCGNCVVWKGAPTTPLITIAMTKLVAEVLEKNNLPGAIFTAMCGGAEIGEAIAKDTRIPLVSFTGSSRVGSMVQQTVNARSGKTLLELSGNNAIIVMDDADIQLAARSVLFAAVGTAGQRCTTCRRLLLHESVYDKVLEQLLTSYKQVKIGNPLEKGTLLGPLHTPESKKNFEKGIEVIKSQGGKILTGGKAVEGEGNFVEPTIIEISADAAVVKEELFAPVLYVLKFKSFGEAVAINNSVPQGLSSSIFTRNPENIFRWIGPLGSDCGIVNVNIPTNGAEIGGAFGGEKATGGGREAGSDSWKQYMRRSTCTINYGNELPLAQGINFG</sequence>
<accession>Q9SYG7</accession>
<accession>Q546B7</accession>